<protein>
    <recommendedName>
        <fullName>Phosphatidylinositol transfer protein alpha isoform</fullName>
        <shortName>PI-TP-alpha</shortName>
        <shortName>PtdIns transfer protein alpha</shortName>
        <shortName>PtdInsTP alpha</shortName>
    </recommendedName>
</protein>
<keyword id="KW-0007">Acetylation</keyword>
<keyword id="KW-0963">Cytoplasm</keyword>
<keyword id="KW-0445">Lipid transport</keyword>
<keyword id="KW-0446">Lipid-binding</keyword>
<keyword id="KW-0539">Nucleus</keyword>
<keyword id="KW-1185">Reference proteome</keyword>
<keyword id="KW-0813">Transport</keyword>
<evidence type="ECO:0000250" key="1">
    <source>
        <dbReference type="UniProtKB" id="P53810"/>
    </source>
</evidence>
<evidence type="ECO:0000250" key="2">
    <source>
        <dbReference type="UniProtKB" id="Q00169"/>
    </source>
</evidence>
<evidence type="ECO:0000250" key="3">
    <source>
        <dbReference type="UniProtKB" id="Q2HJ54"/>
    </source>
</evidence>
<evidence type="ECO:0000256" key="4">
    <source>
        <dbReference type="SAM" id="MobiDB-lite"/>
    </source>
</evidence>
<evidence type="ECO:0000305" key="5"/>
<organism>
    <name type="scientific">Oryctolagus cuniculus</name>
    <name type="common">Rabbit</name>
    <dbReference type="NCBI Taxonomy" id="9986"/>
    <lineage>
        <taxon>Eukaryota</taxon>
        <taxon>Metazoa</taxon>
        <taxon>Chordata</taxon>
        <taxon>Craniata</taxon>
        <taxon>Vertebrata</taxon>
        <taxon>Euteleostomi</taxon>
        <taxon>Mammalia</taxon>
        <taxon>Eutheria</taxon>
        <taxon>Euarchontoglires</taxon>
        <taxon>Glires</taxon>
        <taxon>Lagomorpha</taxon>
        <taxon>Leporidae</taxon>
        <taxon>Oryctolagus</taxon>
    </lineage>
</organism>
<name>PIPNA_RABIT</name>
<reference key="1">
    <citation type="journal article" date="1996" name="Gene">
        <title>Isolation and sequencing of the cDNA encoding phosphatidylinositol transfer protein from rabbit lung.</title>
        <authorList>
            <person name="Tsao F.H.C."/>
            <person name="Cheng W."/>
            <person name="Chen X.R."/>
            <person name="Chen X.M."/>
        </authorList>
    </citation>
    <scope>NUCLEOTIDE SEQUENCE [GENOMIC DNA]</scope>
    <source>
        <tissue>Lung</tissue>
    </source>
</reference>
<accession>P48738</accession>
<sequence length="270" mass="31906">MVLLKEYRVILPVSVDEYQVGQLYSVAEASKNETGGGEGVEVLVNEPYEKDGERGQYTHKIYHLQSKVPTFVRMLAPEGALNIHEKAWNAYPYCRTVITNEYMKEDFLIKIETWHKPDLGTQENVHKLEPETWKHVEVIYIDIADRSQVLSKDYKAEEDPAKFKSIKTGRGPLGPNWKQELVNQKDCPYMCAYKLVTVKFKWWGLQNKVENFIHKQERRLFTNFHRQLFCWLDKWVDLTMDDIRRMEEETKRQLDEMRQKDPVKGMTADD</sequence>
<feature type="initiator methionine" description="Removed" evidence="3">
    <location>
        <position position="1"/>
    </location>
</feature>
<feature type="chain" id="PRO_0000191641" description="Phosphatidylinositol transfer protein alpha isoform">
    <location>
        <begin position="2"/>
        <end position="270"/>
    </location>
</feature>
<feature type="region of interest" description="Disordered" evidence="4">
    <location>
        <begin position="250"/>
        <end position="270"/>
    </location>
</feature>
<feature type="compositionally biased region" description="Basic and acidic residues" evidence="4">
    <location>
        <begin position="250"/>
        <end position="263"/>
    </location>
</feature>
<feature type="binding site" evidence="2">
    <location>
        <position position="58"/>
    </location>
    <ligand>
        <name>a 1,2-diacyl-sn-glycero-3-phospho-(1D-myo-inositol)</name>
        <dbReference type="ChEBI" id="CHEBI:57880"/>
    </ligand>
</feature>
<feature type="binding site" evidence="2">
    <location>
        <position position="60"/>
    </location>
    <ligand>
        <name>a 1,2-diacyl-sn-glycero-3-phospho-(1D-myo-inositol)</name>
        <dbReference type="ChEBI" id="CHEBI:57880"/>
    </ligand>
</feature>
<feature type="binding site" evidence="2">
    <location>
        <position position="85"/>
    </location>
    <ligand>
        <name>a 1,2-diacyl-sn-glycero-3-phospho-(1D-myo-inositol)</name>
        <dbReference type="ChEBI" id="CHEBI:57880"/>
    </ligand>
</feature>
<feature type="binding site" evidence="2">
    <location>
        <position position="89"/>
    </location>
    <ligand>
        <name>a 1,2-diacyl-sn-glycero-3-phospho-(1D-myo-inositol)</name>
        <dbReference type="ChEBI" id="CHEBI:57880"/>
    </ligand>
</feature>
<feature type="binding site" evidence="2">
    <location>
        <position position="96"/>
    </location>
    <ligand>
        <name>a 1,2-diacyl-sn-glycero-3-phospho-(1D-myo-inositol)</name>
        <dbReference type="ChEBI" id="CHEBI:57880"/>
    </ligand>
</feature>
<feature type="binding site" evidence="2">
    <location>
        <position position="194"/>
    </location>
    <ligand>
        <name>a 1,2-diacyl-sn-glycero-3-phospho-(1D-myo-inositol)</name>
        <dbReference type="ChEBI" id="CHEBI:57880"/>
    </ligand>
</feature>
<feature type="modified residue" description="N6-acetyllysine" evidence="2">
    <location>
        <position position="215"/>
    </location>
</feature>
<dbReference type="EMBL" id="U12558">
    <property type="protein sequence ID" value="AAB08971.1"/>
    <property type="molecule type" value="Genomic_DNA"/>
</dbReference>
<dbReference type="PIR" id="JC4854">
    <property type="entry name" value="JC4854"/>
</dbReference>
<dbReference type="RefSeq" id="NP_001164622.1">
    <property type="nucleotide sequence ID" value="NM_001171151.1"/>
</dbReference>
<dbReference type="RefSeq" id="XP_008268889.1">
    <property type="nucleotide sequence ID" value="XM_008270667.4"/>
</dbReference>
<dbReference type="SMR" id="P48738"/>
<dbReference type="FunCoup" id="P48738">
    <property type="interactions" value="2227"/>
</dbReference>
<dbReference type="STRING" id="9986.ENSOCUP00000016962"/>
<dbReference type="PaxDb" id="9986-ENSOCUP00000016962"/>
<dbReference type="Ensembl" id="ENSOCUT00000022040.2">
    <property type="protein sequence ID" value="ENSOCUP00000016962.2"/>
    <property type="gene ID" value="ENSOCUG00000000075.4"/>
</dbReference>
<dbReference type="GeneID" id="100328961"/>
<dbReference type="KEGG" id="ocu:100328961"/>
<dbReference type="CTD" id="5306"/>
<dbReference type="eggNOG" id="KOG3668">
    <property type="taxonomic scope" value="Eukaryota"/>
</dbReference>
<dbReference type="GeneTree" id="ENSGT00940000157119"/>
<dbReference type="InParanoid" id="P48738"/>
<dbReference type="OrthoDB" id="18453at2759"/>
<dbReference type="Proteomes" id="UP000001811">
    <property type="component" value="Chromosome 19"/>
</dbReference>
<dbReference type="Bgee" id="ENSOCUG00000000075">
    <property type="expression patterns" value="Expressed in autopod skin and 17 other cell types or tissues"/>
</dbReference>
<dbReference type="ExpressionAtlas" id="P48738">
    <property type="expression patterns" value="baseline"/>
</dbReference>
<dbReference type="GO" id="GO:0005737">
    <property type="term" value="C:cytoplasm"/>
    <property type="evidence" value="ECO:0000250"/>
    <property type="project" value="UniProtKB"/>
</dbReference>
<dbReference type="GO" id="GO:0005634">
    <property type="term" value="C:nucleus"/>
    <property type="evidence" value="ECO:0000250"/>
    <property type="project" value="UniProtKB"/>
</dbReference>
<dbReference type="GO" id="GO:0031210">
    <property type="term" value="F:phosphatidylcholine binding"/>
    <property type="evidence" value="ECO:0000250"/>
    <property type="project" value="UniProtKB"/>
</dbReference>
<dbReference type="GO" id="GO:0120019">
    <property type="term" value="F:phosphatidylcholine transfer activity"/>
    <property type="evidence" value="ECO:0000250"/>
    <property type="project" value="UniProtKB"/>
</dbReference>
<dbReference type="GO" id="GO:0035091">
    <property type="term" value="F:phosphatidylinositol binding"/>
    <property type="evidence" value="ECO:0000250"/>
    <property type="project" value="UniProtKB"/>
</dbReference>
<dbReference type="GO" id="GO:0008526">
    <property type="term" value="F:phosphatidylinositol transfer activity"/>
    <property type="evidence" value="ECO:0000250"/>
    <property type="project" value="UniProtKB"/>
</dbReference>
<dbReference type="GO" id="GO:0007409">
    <property type="term" value="P:axonogenesis"/>
    <property type="evidence" value="ECO:0007669"/>
    <property type="project" value="Ensembl"/>
</dbReference>
<dbReference type="CDD" id="cd08888">
    <property type="entry name" value="SRPBCC_PITPNA-B_like"/>
    <property type="match status" value="1"/>
</dbReference>
<dbReference type="FunFam" id="3.30.530.20:FF:000004">
    <property type="entry name" value="Phosphatidylinositol transfer protein alpha isoform"/>
    <property type="match status" value="1"/>
</dbReference>
<dbReference type="Gene3D" id="3.30.530.20">
    <property type="match status" value="1"/>
</dbReference>
<dbReference type="InterPro" id="IPR001666">
    <property type="entry name" value="PI_transfer"/>
</dbReference>
<dbReference type="InterPro" id="IPR055261">
    <property type="entry name" value="PI_transfer_N"/>
</dbReference>
<dbReference type="InterPro" id="IPR023393">
    <property type="entry name" value="START-like_dom_sf"/>
</dbReference>
<dbReference type="PANTHER" id="PTHR10658">
    <property type="entry name" value="PHOSPHATIDYLINOSITOL TRANSFER PROTEIN"/>
    <property type="match status" value="1"/>
</dbReference>
<dbReference type="PANTHER" id="PTHR10658:SF28">
    <property type="entry name" value="PHOSPHATIDYLINOSITOL TRANSFER PROTEIN ALPHA ISOFORM"/>
    <property type="match status" value="1"/>
</dbReference>
<dbReference type="Pfam" id="PF02121">
    <property type="entry name" value="IP_trans"/>
    <property type="match status" value="1"/>
</dbReference>
<dbReference type="PRINTS" id="PR00391">
    <property type="entry name" value="PITRANSFER"/>
</dbReference>
<dbReference type="SUPFAM" id="SSF55961">
    <property type="entry name" value="Bet v1-like"/>
    <property type="match status" value="1"/>
</dbReference>
<proteinExistence type="inferred from homology"/>
<comment type="function">
    <text evidence="2">Catalyzes the transfer of phosphatidylinositol (PI) and phosphatidylcholine (PC) between membranes (By similarity). Shows a preference for PI and PC containing shorter saturated or monosaturated acyl chains at the sn-1 and sn-2 positions (By similarity). Preference order for PC is C16:1 &gt; C16:0 &gt; C18:1 &gt; C18:0 &gt; C20:4 and for PI is C16:1 &gt; C16:0 &gt; C18:1 &gt; C18:0 &gt; C20:4 &gt; C20:3 (By similarity).</text>
</comment>
<comment type="catalytic activity">
    <reaction evidence="2">
        <text>a 1,2-diacyl-sn-glycero-3-phosphocholine(in) = a 1,2-diacyl-sn-glycero-3-phosphocholine(out)</text>
        <dbReference type="Rhea" id="RHEA:38571"/>
        <dbReference type="ChEBI" id="CHEBI:57643"/>
    </reaction>
    <physiologicalReaction direction="left-to-right" evidence="2">
        <dbReference type="Rhea" id="RHEA:38572"/>
    </physiologicalReaction>
</comment>
<comment type="catalytic activity">
    <reaction evidence="2">
        <text>a 1,2-diacyl-sn-glycero-3-phospho-(1D-myo-inositol)(in) = a 1,2-diacyl-sn-glycero-3-phospho-(1D-myo-inositol)(out)</text>
        <dbReference type="Rhea" id="RHEA:38691"/>
        <dbReference type="ChEBI" id="CHEBI:57880"/>
    </reaction>
    <physiologicalReaction direction="left-to-right" evidence="2">
        <dbReference type="Rhea" id="RHEA:38692"/>
    </physiologicalReaction>
</comment>
<comment type="subcellular location">
    <subcellularLocation>
        <location evidence="1">Cytoplasm</location>
    </subcellularLocation>
    <subcellularLocation>
        <location evidence="1">Nucleus</location>
    </subcellularLocation>
</comment>
<comment type="PTM">
    <text evidence="1">Phosphorylated by PKC in a calcium and phosphatidylserine-dependent manner.</text>
</comment>
<comment type="similarity">
    <text evidence="5">Belongs to the PtdIns transfer protein family. PI transfer class I subfamily.</text>
</comment>
<gene>
    <name type="primary">PITPNA</name>
    <name type="synonym">PITPN</name>
</gene>